<comment type="function">
    <text evidence="1">Ion channel, which might have a role in genome packaging and uncoating processes.</text>
</comment>
<comment type="subunit">
    <text evidence="1">Homodimer; disulfide-linked. Homotetramer; disulfide-linked.</text>
</comment>
<comment type="subcellular location">
    <molecule>Polyprotein p42</molecule>
    <subcellularLocation>
        <location evidence="3">Host endoplasmic reticulum membrane</location>
        <topology evidence="3">Multi-pass membrane protein</topology>
    </subcellularLocation>
</comment>
<comment type="subcellular location">
    <molecule>Protein M1'</molecule>
    <subcellularLocation>
        <location evidence="3">Virion membrane</location>
        <topology evidence="3">Single-pass type II membrane protein</topology>
    </subcellularLocation>
</comment>
<comment type="subcellular location">
    <molecule>Protein CM2</molecule>
    <subcellularLocation>
        <location evidence="3">Virion membrane</location>
        <topology evidence="3">Single-pass type I membrane protein</topology>
    </subcellularLocation>
    <subcellularLocation>
        <location evidence="3">Host cell membrane</location>
        <topology evidence="3">Single-pass type I membrane protein</topology>
    </subcellularLocation>
</comment>
<comment type="alternative products">
    <event type="alternative splicing"/>
    <isoform>
        <id>Q788J5-1</id>
        <name>p42</name>
        <sequence type="displayed"/>
    </isoform>
    <isoform>
        <id>Q788J5-2</id>
        <name>M1</name>
        <name>CM1</name>
        <sequence type="described" ref="VSP_022112"/>
    </isoform>
</comment>
<comment type="PTM">
    <text evidence="1">Palmitoylated.</text>
</comment>
<comment type="PTM">
    <text evidence="1">N-glycosylated.</text>
</comment>
<comment type="PTM">
    <text evidence="1">Ser-337 is the major site of phosphorylation, Ser-362 being a minor one.</text>
</comment>
<comment type="miscellaneous">
    <molecule>Isoform p42</molecule>
    <text>Produced by unspliced mRNA.</text>
</comment>
<comment type="similarity">
    <text evidence="3">Belongs to the influenza C protein M1 family.</text>
</comment>
<reference key="1">
    <citation type="journal article" date="1997" name="Virus Genes">
        <title>Evolutionary analysis of influenza C virus M genes.</title>
        <authorList>
            <person name="Tada Y."/>
            <person name="Hongo S."/>
            <person name="Muraki Y."/>
            <person name="Sugawara K."/>
            <person name="Kitame F."/>
            <person name="Nakamura K."/>
        </authorList>
    </citation>
    <scope>NUCLEOTIDE SEQUENCE [GENOMIC RNA]</scope>
</reference>
<protein>
    <recommendedName>
        <fullName>Polyprotein p42</fullName>
    </recommendedName>
    <component>
        <recommendedName>
            <fullName>Protein M1'</fullName>
        </recommendedName>
        <alternativeName>
            <fullName>CM1'</fullName>
        </alternativeName>
        <alternativeName>
            <fullName>p31</fullName>
        </alternativeName>
    </component>
    <component>
        <recommendedName>
            <fullName>Protein CM2</fullName>
        </recommendedName>
    </component>
</protein>
<organism>
    <name type="scientific">Influenza C virus (strain C/California/1978)</name>
    <dbReference type="NCBI Taxonomy" id="203224"/>
    <lineage>
        <taxon>Viruses</taxon>
        <taxon>Riboviria</taxon>
        <taxon>Orthornavirae</taxon>
        <taxon>Negarnaviricota</taxon>
        <taxon>Polyploviricotina</taxon>
        <taxon>Insthoviricetes</taxon>
        <taxon>Articulavirales</taxon>
        <taxon>Orthomyxoviridae</taxon>
        <taxon>Gammainfluenzavirus</taxon>
        <taxon>Gammainfluenzavirus influenzae</taxon>
        <taxon>Influenza C virus</taxon>
    </lineage>
</organism>
<sequence>MAHEILIAETEAFLKNVAPETRTAIISAITGGKSACKSAAKLIKNEHLPLMSGEATTMHIVMRCLYPEIKPWKKASDMLNKATSSLKKSEGRDIRKQMKAAGDFLGVESMMKMRAFRDDQIMEMVEEVYDHPDDYTPDIRIGTITAWLRCKNKKSERYRSNVSESGRTALKIHEVRKASTAMNEIAGITGLGEEALSLQRQTESLAILCNHTFGSNIMRPHLEKAIKGVEGRVGEMGRMAMKWLVVIIYFSITSKPASACNLKTCLNLFNNTDAVTVHCFNENQGYMLTLASLGLGIITMLYLLVKIIIELVNGFVLGRWERWCGDIKTTIMPEIDSMEKDIALSRERLDLGEDAPDETDNSPIPFSNDGIFEI</sequence>
<gene>
    <name type="primary">M</name>
</gene>
<organismHost>
    <name type="scientific">Homo sapiens</name>
    <name type="common">Human</name>
    <dbReference type="NCBI Taxonomy" id="9606"/>
</organismHost>
<organismHost>
    <name type="scientific">Sus scrofa</name>
    <name type="common">Pig</name>
    <dbReference type="NCBI Taxonomy" id="9823"/>
</organismHost>
<accession>Q788J5</accession>
<accession>Q9WAD5</accession>
<dbReference type="EMBL" id="AB000608">
    <property type="protein sequence ID" value="BAA75836.1"/>
    <property type="molecule type" value="Genomic_RNA"/>
</dbReference>
<dbReference type="EMBL" id="AB000608">
    <property type="protein sequence ID" value="BAA75837.1"/>
    <property type="molecule type" value="Genomic_RNA"/>
</dbReference>
<dbReference type="SMR" id="Q788J5"/>
<dbReference type="GlyCosmos" id="Q788J5">
    <property type="glycosylation" value="1 site, No reported glycans"/>
</dbReference>
<dbReference type="GO" id="GO:0044167">
    <property type="term" value="C:host cell endoplasmic reticulum membrane"/>
    <property type="evidence" value="ECO:0007669"/>
    <property type="project" value="UniProtKB-SubCell"/>
</dbReference>
<dbReference type="GO" id="GO:0020002">
    <property type="term" value="C:host cell plasma membrane"/>
    <property type="evidence" value="ECO:0007669"/>
    <property type="project" value="UniProtKB-SubCell"/>
</dbReference>
<dbReference type="GO" id="GO:0016020">
    <property type="term" value="C:membrane"/>
    <property type="evidence" value="ECO:0007669"/>
    <property type="project" value="UniProtKB-KW"/>
</dbReference>
<dbReference type="GO" id="GO:0019028">
    <property type="term" value="C:viral capsid"/>
    <property type="evidence" value="ECO:0007669"/>
    <property type="project" value="InterPro"/>
</dbReference>
<dbReference type="GO" id="GO:0055036">
    <property type="term" value="C:virion membrane"/>
    <property type="evidence" value="ECO:0007669"/>
    <property type="project" value="UniProtKB-SubCell"/>
</dbReference>
<dbReference type="GO" id="GO:0015267">
    <property type="term" value="F:channel activity"/>
    <property type="evidence" value="ECO:0007669"/>
    <property type="project" value="UniProtKB-KW"/>
</dbReference>
<dbReference type="GO" id="GO:0039660">
    <property type="term" value="F:structural constituent of virion"/>
    <property type="evidence" value="ECO:0007669"/>
    <property type="project" value="UniProtKB-KW"/>
</dbReference>
<dbReference type="GO" id="GO:0034220">
    <property type="term" value="P:monoatomic ion transmembrane transport"/>
    <property type="evidence" value="ECO:0007669"/>
    <property type="project" value="UniProtKB-KW"/>
</dbReference>
<dbReference type="InterPro" id="IPR004271">
    <property type="entry name" value="CM1"/>
</dbReference>
<dbReference type="InterPro" id="IPR004267">
    <property type="entry name" value="CM2"/>
</dbReference>
<dbReference type="Pfam" id="PF03026">
    <property type="entry name" value="CM1"/>
    <property type="match status" value="1"/>
</dbReference>
<dbReference type="Pfam" id="PF03021">
    <property type="entry name" value="CM2"/>
    <property type="match status" value="1"/>
</dbReference>
<proteinExistence type="inferred from homology"/>
<evidence type="ECO:0000250" key="1"/>
<evidence type="ECO:0000255" key="2"/>
<evidence type="ECO:0000305" key="3"/>
<feature type="chain" id="PRO_0000408876" description="Polyprotein p42">
    <location>
        <begin position="1"/>
        <end position="374"/>
    </location>
</feature>
<feature type="chain" id="PRO_0000269457" description="Protein M1'">
    <location>
        <begin position="1"/>
        <end position="259"/>
    </location>
</feature>
<feature type="chain" id="PRO_0000269904" description="Protein CM2">
    <location>
        <begin position="260"/>
        <end position="374"/>
    </location>
</feature>
<feature type="topological domain" description="Cytoplasmic" evidence="2">
    <location>
        <begin position="1"/>
        <end position="238"/>
    </location>
</feature>
<feature type="transmembrane region" description="Helical; Signal-anchor for type II membrane protein" evidence="2">
    <location>
        <begin position="239"/>
        <end position="259"/>
    </location>
</feature>
<feature type="topological domain" description="Extracellular" evidence="2">
    <location>
        <begin position="260"/>
        <end position="288"/>
    </location>
</feature>
<feature type="transmembrane region" description="Helical" evidence="2">
    <location>
        <begin position="289"/>
        <end position="309"/>
    </location>
</feature>
<feature type="topological domain" description="Cytoplasmic" evidence="2">
    <location>
        <begin position="310"/>
        <end position="374"/>
    </location>
</feature>
<feature type="site" description="Cleavage; by host signal peptidase">
    <location>
        <begin position="259"/>
        <end position="260"/>
    </location>
</feature>
<feature type="modified residue" description="Phosphoserine; by host" evidence="1">
    <location>
        <position position="337"/>
    </location>
</feature>
<feature type="modified residue" description="Phosphoserine; by host" evidence="1">
    <location>
        <position position="362"/>
    </location>
</feature>
<feature type="lipid moiety-binding region" description="S-palmitoyl cysteine; by host" evidence="1">
    <location>
        <position position="324"/>
    </location>
</feature>
<feature type="glycosylation site" description="N-linked (GlcNAc...) asparagine; by host" evidence="2">
    <location>
        <position position="270"/>
    </location>
</feature>
<feature type="splice variant" id="VSP_022112" description="In isoform M1." evidence="3">
    <location>
        <begin position="243"/>
        <end position="374"/>
    </location>
</feature>
<keyword id="KW-0025">Alternative splicing</keyword>
<keyword id="KW-1015">Disulfide bond</keyword>
<keyword id="KW-0325">Glycoprotein</keyword>
<keyword id="KW-1032">Host cell membrane</keyword>
<keyword id="KW-1038">Host endoplasmic reticulum</keyword>
<keyword id="KW-1043">Host membrane</keyword>
<keyword id="KW-0407">Ion channel</keyword>
<keyword id="KW-0406">Ion transport</keyword>
<keyword id="KW-0449">Lipoprotein</keyword>
<keyword id="KW-0472">Membrane</keyword>
<keyword id="KW-0564">Palmitate</keyword>
<keyword id="KW-0597">Phosphoprotein</keyword>
<keyword id="KW-0735">Signal-anchor</keyword>
<keyword id="KW-0812">Transmembrane</keyword>
<keyword id="KW-1133">Transmembrane helix</keyword>
<keyword id="KW-0813">Transport</keyword>
<keyword id="KW-1182">Viral ion channel</keyword>
<keyword id="KW-0468">Viral matrix protein</keyword>
<keyword id="KW-0946">Virion</keyword>
<name>MAT_INCCA</name>